<gene>
    <name evidence="1" type="primary">lipA</name>
    <name type="ordered locus">VFMJ11_0761</name>
</gene>
<keyword id="KW-0004">4Fe-4S</keyword>
<keyword id="KW-0963">Cytoplasm</keyword>
<keyword id="KW-0408">Iron</keyword>
<keyword id="KW-0411">Iron-sulfur</keyword>
<keyword id="KW-0479">Metal-binding</keyword>
<keyword id="KW-0949">S-adenosyl-L-methionine</keyword>
<keyword id="KW-0808">Transferase</keyword>
<evidence type="ECO:0000255" key="1">
    <source>
        <dbReference type="HAMAP-Rule" id="MF_00206"/>
    </source>
</evidence>
<evidence type="ECO:0000255" key="2">
    <source>
        <dbReference type="PROSITE-ProRule" id="PRU01266"/>
    </source>
</evidence>
<proteinExistence type="inferred from homology"/>
<protein>
    <recommendedName>
        <fullName evidence="1">Lipoyl synthase</fullName>
        <ecNumber evidence="1">2.8.1.8</ecNumber>
    </recommendedName>
    <alternativeName>
        <fullName evidence="1">Lip-syn</fullName>
        <shortName evidence="1">LS</shortName>
    </alternativeName>
    <alternativeName>
        <fullName evidence="1">Lipoate synthase</fullName>
    </alternativeName>
    <alternativeName>
        <fullName evidence="1">Lipoic acid synthase</fullName>
    </alternativeName>
    <alternativeName>
        <fullName evidence="1">Sulfur insertion protein LipA</fullName>
    </alternativeName>
</protein>
<reference key="1">
    <citation type="submission" date="2008-08" db="EMBL/GenBank/DDBJ databases">
        <title>Complete sequence of Vibrio fischeri strain MJ11.</title>
        <authorList>
            <person name="Mandel M.J."/>
            <person name="Stabb E.V."/>
            <person name="Ruby E.G."/>
            <person name="Ferriera S."/>
            <person name="Johnson J."/>
            <person name="Kravitz S."/>
            <person name="Beeson K."/>
            <person name="Sutton G."/>
            <person name="Rogers Y.-H."/>
            <person name="Friedman R."/>
            <person name="Frazier M."/>
            <person name="Venter J.C."/>
        </authorList>
    </citation>
    <scope>NUCLEOTIDE SEQUENCE [LARGE SCALE GENOMIC DNA]</scope>
    <source>
        <strain>MJ11</strain>
    </source>
</reference>
<accession>B5FBJ6</accession>
<feature type="chain" id="PRO_1000099640" description="Lipoyl synthase">
    <location>
        <begin position="1"/>
        <end position="321"/>
    </location>
</feature>
<feature type="domain" description="Radical SAM core" evidence="2">
    <location>
        <begin position="80"/>
        <end position="297"/>
    </location>
</feature>
<feature type="binding site" evidence="1">
    <location>
        <position position="68"/>
    </location>
    <ligand>
        <name>[4Fe-4S] cluster</name>
        <dbReference type="ChEBI" id="CHEBI:49883"/>
        <label>1</label>
    </ligand>
</feature>
<feature type="binding site" evidence="1">
    <location>
        <position position="73"/>
    </location>
    <ligand>
        <name>[4Fe-4S] cluster</name>
        <dbReference type="ChEBI" id="CHEBI:49883"/>
        <label>1</label>
    </ligand>
</feature>
<feature type="binding site" evidence="1">
    <location>
        <position position="79"/>
    </location>
    <ligand>
        <name>[4Fe-4S] cluster</name>
        <dbReference type="ChEBI" id="CHEBI:49883"/>
        <label>1</label>
    </ligand>
</feature>
<feature type="binding site" evidence="1">
    <location>
        <position position="94"/>
    </location>
    <ligand>
        <name>[4Fe-4S] cluster</name>
        <dbReference type="ChEBI" id="CHEBI:49883"/>
        <label>2</label>
        <note>4Fe-4S-S-AdoMet</note>
    </ligand>
</feature>
<feature type="binding site" evidence="1">
    <location>
        <position position="98"/>
    </location>
    <ligand>
        <name>[4Fe-4S] cluster</name>
        <dbReference type="ChEBI" id="CHEBI:49883"/>
        <label>2</label>
        <note>4Fe-4S-S-AdoMet</note>
    </ligand>
</feature>
<feature type="binding site" evidence="1">
    <location>
        <position position="101"/>
    </location>
    <ligand>
        <name>[4Fe-4S] cluster</name>
        <dbReference type="ChEBI" id="CHEBI:49883"/>
        <label>2</label>
        <note>4Fe-4S-S-AdoMet</note>
    </ligand>
</feature>
<feature type="binding site" evidence="1">
    <location>
        <position position="308"/>
    </location>
    <ligand>
        <name>[4Fe-4S] cluster</name>
        <dbReference type="ChEBI" id="CHEBI:49883"/>
        <label>1</label>
    </ligand>
</feature>
<name>LIPA_ALIFM</name>
<comment type="function">
    <text evidence="1">Catalyzes the radical-mediated insertion of two sulfur atoms into the C-6 and C-8 positions of the octanoyl moiety bound to the lipoyl domains of lipoate-dependent enzymes, thereby converting the octanoylated domains into lipoylated derivatives.</text>
</comment>
<comment type="catalytic activity">
    <reaction evidence="1">
        <text>[[Fe-S] cluster scaffold protein carrying a second [4Fe-4S](2+) cluster] + N(6)-octanoyl-L-lysyl-[protein] + 2 oxidized [2Fe-2S]-[ferredoxin] + 2 S-adenosyl-L-methionine + 4 H(+) = [[Fe-S] cluster scaffold protein] + N(6)-[(R)-dihydrolipoyl]-L-lysyl-[protein] + 4 Fe(3+) + 2 hydrogen sulfide + 2 5'-deoxyadenosine + 2 L-methionine + 2 reduced [2Fe-2S]-[ferredoxin]</text>
        <dbReference type="Rhea" id="RHEA:16585"/>
        <dbReference type="Rhea" id="RHEA-COMP:9928"/>
        <dbReference type="Rhea" id="RHEA-COMP:10000"/>
        <dbReference type="Rhea" id="RHEA-COMP:10001"/>
        <dbReference type="Rhea" id="RHEA-COMP:10475"/>
        <dbReference type="Rhea" id="RHEA-COMP:14568"/>
        <dbReference type="Rhea" id="RHEA-COMP:14569"/>
        <dbReference type="ChEBI" id="CHEBI:15378"/>
        <dbReference type="ChEBI" id="CHEBI:17319"/>
        <dbReference type="ChEBI" id="CHEBI:29034"/>
        <dbReference type="ChEBI" id="CHEBI:29919"/>
        <dbReference type="ChEBI" id="CHEBI:33722"/>
        <dbReference type="ChEBI" id="CHEBI:33737"/>
        <dbReference type="ChEBI" id="CHEBI:33738"/>
        <dbReference type="ChEBI" id="CHEBI:57844"/>
        <dbReference type="ChEBI" id="CHEBI:59789"/>
        <dbReference type="ChEBI" id="CHEBI:78809"/>
        <dbReference type="ChEBI" id="CHEBI:83100"/>
        <dbReference type="EC" id="2.8.1.8"/>
    </reaction>
</comment>
<comment type="cofactor">
    <cofactor evidence="1">
        <name>[4Fe-4S] cluster</name>
        <dbReference type="ChEBI" id="CHEBI:49883"/>
    </cofactor>
    <text evidence="1">Binds 2 [4Fe-4S] clusters per subunit. One cluster is coordinated with 3 cysteines and an exchangeable S-adenosyl-L-methionine.</text>
</comment>
<comment type="pathway">
    <text evidence="1">Protein modification; protein lipoylation via endogenous pathway; protein N(6)-(lipoyl)lysine from octanoyl-[acyl-carrier-protein]: step 2/2.</text>
</comment>
<comment type="subcellular location">
    <subcellularLocation>
        <location evidence="1">Cytoplasm</location>
    </subcellularLocation>
</comment>
<comment type="similarity">
    <text evidence="1">Belongs to the radical SAM superfamily. Lipoyl synthase family.</text>
</comment>
<organism>
    <name type="scientific">Aliivibrio fischeri (strain MJ11)</name>
    <name type="common">Vibrio fischeri</name>
    <dbReference type="NCBI Taxonomy" id="388396"/>
    <lineage>
        <taxon>Bacteria</taxon>
        <taxon>Pseudomonadati</taxon>
        <taxon>Pseudomonadota</taxon>
        <taxon>Gammaproteobacteria</taxon>
        <taxon>Vibrionales</taxon>
        <taxon>Vibrionaceae</taxon>
        <taxon>Aliivibrio</taxon>
    </lineage>
</organism>
<sequence length="321" mass="36380">MSKPIQMEKGVKYRDADKMALIPVKNMPTEQKEVLRKPEWMKIKLPASSKRIDDIKSAMRKNNLHSVCEEASCPNLAECFNHGTATFMILGAICTRRCPFCDVAHGRPVAPEAEEPKKLAKTIQDMKLKYVVITSVDRDDLRDGGAQHFADCNREIRALNPEIRIETLVPDFRGRMDRALEAMIDNPPDVFNHNLETAPRLYRKVRPGANYQWSLDLLKKFKDQHPNVPTKSGLMMGLGETKEEIVEVLKDLRAHGVTMLTLGQYLAPSRHHLPVERYVPPAEFDELKEIALELGFTHAACGPFVRSSYHADLQAKGEEVK</sequence>
<dbReference type="EC" id="2.8.1.8" evidence="1"/>
<dbReference type="EMBL" id="CP001139">
    <property type="protein sequence ID" value="ACH65629.1"/>
    <property type="molecule type" value="Genomic_DNA"/>
</dbReference>
<dbReference type="RefSeq" id="WP_012533182.1">
    <property type="nucleotide sequence ID" value="NC_011184.1"/>
</dbReference>
<dbReference type="SMR" id="B5FBJ6"/>
<dbReference type="KEGG" id="vfm:VFMJ11_0761"/>
<dbReference type="HOGENOM" id="CLU_033144_2_1_6"/>
<dbReference type="UniPathway" id="UPA00538">
    <property type="reaction ID" value="UER00593"/>
</dbReference>
<dbReference type="Proteomes" id="UP000001857">
    <property type="component" value="Chromosome I"/>
</dbReference>
<dbReference type="GO" id="GO:0005737">
    <property type="term" value="C:cytoplasm"/>
    <property type="evidence" value="ECO:0007669"/>
    <property type="project" value="UniProtKB-SubCell"/>
</dbReference>
<dbReference type="GO" id="GO:0051539">
    <property type="term" value="F:4 iron, 4 sulfur cluster binding"/>
    <property type="evidence" value="ECO:0007669"/>
    <property type="project" value="UniProtKB-UniRule"/>
</dbReference>
<dbReference type="GO" id="GO:0016992">
    <property type="term" value="F:lipoate synthase activity"/>
    <property type="evidence" value="ECO:0007669"/>
    <property type="project" value="UniProtKB-UniRule"/>
</dbReference>
<dbReference type="GO" id="GO:0046872">
    <property type="term" value="F:metal ion binding"/>
    <property type="evidence" value="ECO:0007669"/>
    <property type="project" value="UniProtKB-KW"/>
</dbReference>
<dbReference type="CDD" id="cd01335">
    <property type="entry name" value="Radical_SAM"/>
    <property type="match status" value="1"/>
</dbReference>
<dbReference type="FunFam" id="3.20.20.70:FF:000023">
    <property type="entry name" value="Lipoyl synthase"/>
    <property type="match status" value="1"/>
</dbReference>
<dbReference type="Gene3D" id="3.20.20.70">
    <property type="entry name" value="Aldolase class I"/>
    <property type="match status" value="1"/>
</dbReference>
<dbReference type="HAMAP" id="MF_00206">
    <property type="entry name" value="Lipoyl_synth"/>
    <property type="match status" value="1"/>
</dbReference>
<dbReference type="InterPro" id="IPR013785">
    <property type="entry name" value="Aldolase_TIM"/>
</dbReference>
<dbReference type="InterPro" id="IPR006638">
    <property type="entry name" value="Elp3/MiaA/NifB-like_rSAM"/>
</dbReference>
<dbReference type="InterPro" id="IPR031691">
    <property type="entry name" value="LIAS_N"/>
</dbReference>
<dbReference type="InterPro" id="IPR003698">
    <property type="entry name" value="Lipoyl_synth"/>
</dbReference>
<dbReference type="InterPro" id="IPR007197">
    <property type="entry name" value="rSAM"/>
</dbReference>
<dbReference type="NCBIfam" id="TIGR00510">
    <property type="entry name" value="lipA"/>
    <property type="match status" value="1"/>
</dbReference>
<dbReference type="NCBIfam" id="NF004019">
    <property type="entry name" value="PRK05481.1"/>
    <property type="match status" value="1"/>
</dbReference>
<dbReference type="NCBIfam" id="NF009544">
    <property type="entry name" value="PRK12928.1"/>
    <property type="match status" value="1"/>
</dbReference>
<dbReference type="PANTHER" id="PTHR10949">
    <property type="entry name" value="LIPOYL SYNTHASE"/>
    <property type="match status" value="1"/>
</dbReference>
<dbReference type="PANTHER" id="PTHR10949:SF0">
    <property type="entry name" value="LIPOYL SYNTHASE, MITOCHONDRIAL"/>
    <property type="match status" value="1"/>
</dbReference>
<dbReference type="Pfam" id="PF16881">
    <property type="entry name" value="LIAS_N"/>
    <property type="match status" value="1"/>
</dbReference>
<dbReference type="Pfam" id="PF04055">
    <property type="entry name" value="Radical_SAM"/>
    <property type="match status" value="1"/>
</dbReference>
<dbReference type="PIRSF" id="PIRSF005963">
    <property type="entry name" value="Lipoyl_synth"/>
    <property type="match status" value="1"/>
</dbReference>
<dbReference type="SFLD" id="SFLDF00271">
    <property type="entry name" value="lipoyl_synthase"/>
    <property type="match status" value="1"/>
</dbReference>
<dbReference type="SFLD" id="SFLDS00029">
    <property type="entry name" value="Radical_SAM"/>
    <property type="match status" value="1"/>
</dbReference>
<dbReference type="SMART" id="SM00729">
    <property type="entry name" value="Elp3"/>
    <property type="match status" value="1"/>
</dbReference>
<dbReference type="SUPFAM" id="SSF102114">
    <property type="entry name" value="Radical SAM enzymes"/>
    <property type="match status" value="1"/>
</dbReference>
<dbReference type="PROSITE" id="PS51918">
    <property type="entry name" value="RADICAL_SAM"/>
    <property type="match status" value="1"/>
</dbReference>